<sequence length="121" mass="13518">MAPKKAPAAAEKKVKKAPTTEKKNKKKRSETFAIYIFKVLKQVHPDVGISKKAMNIMNSFINDSFERIALESSKLVRFNKRRTLSSREVQTAVKLLLPGELARHAISEGTKAVTKFSSSTN</sequence>
<name>H2B_TETPY</name>
<dbReference type="PIR" id="A61301">
    <property type="entry name" value="A61301"/>
</dbReference>
<dbReference type="SMR" id="Q7M400"/>
<dbReference type="iPTMnet" id="Q7M400"/>
<dbReference type="GO" id="GO:0000786">
    <property type="term" value="C:nucleosome"/>
    <property type="evidence" value="ECO:0007669"/>
    <property type="project" value="UniProtKB-KW"/>
</dbReference>
<dbReference type="GO" id="GO:0005634">
    <property type="term" value="C:nucleus"/>
    <property type="evidence" value="ECO:0007669"/>
    <property type="project" value="UniProtKB-SubCell"/>
</dbReference>
<dbReference type="GO" id="GO:0003677">
    <property type="term" value="F:DNA binding"/>
    <property type="evidence" value="ECO:0007669"/>
    <property type="project" value="UniProtKB-KW"/>
</dbReference>
<dbReference type="GO" id="GO:0046982">
    <property type="term" value="F:protein heterodimerization activity"/>
    <property type="evidence" value="ECO:0007669"/>
    <property type="project" value="InterPro"/>
</dbReference>
<dbReference type="GO" id="GO:0030527">
    <property type="term" value="F:structural constituent of chromatin"/>
    <property type="evidence" value="ECO:0007669"/>
    <property type="project" value="InterPro"/>
</dbReference>
<dbReference type="CDD" id="cd22910">
    <property type="entry name" value="HFD_H2B"/>
    <property type="match status" value="1"/>
</dbReference>
<dbReference type="FunFam" id="1.10.20.10:FF:000016">
    <property type="entry name" value="Histone H2B"/>
    <property type="match status" value="1"/>
</dbReference>
<dbReference type="Gene3D" id="1.10.20.10">
    <property type="entry name" value="Histone, subunit A"/>
    <property type="match status" value="1"/>
</dbReference>
<dbReference type="InterPro" id="IPR009072">
    <property type="entry name" value="Histone-fold"/>
</dbReference>
<dbReference type="InterPro" id="IPR007125">
    <property type="entry name" value="Histone_H2A/H2B/H3"/>
</dbReference>
<dbReference type="InterPro" id="IPR000558">
    <property type="entry name" value="Histone_H2B"/>
</dbReference>
<dbReference type="InterPro" id="IPR055333">
    <property type="entry name" value="HISTONE_H2B_site"/>
</dbReference>
<dbReference type="PANTHER" id="PTHR23428">
    <property type="entry name" value="HISTONE H2B"/>
    <property type="match status" value="1"/>
</dbReference>
<dbReference type="Pfam" id="PF00125">
    <property type="entry name" value="Histone"/>
    <property type="match status" value="1"/>
</dbReference>
<dbReference type="PRINTS" id="PR00621">
    <property type="entry name" value="HISTONEH2B"/>
</dbReference>
<dbReference type="SMART" id="SM00427">
    <property type="entry name" value="H2B"/>
    <property type="match status" value="1"/>
</dbReference>
<dbReference type="SUPFAM" id="SSF47113">
    <property type="entry name" value="Histone-fold"/>
    <property type="match status" value="1"/>
</dbReference>
<dbReference type="PROSITE" id="PS00357">
    <property type="entry name" value="HISTONE_H2B"/>
    <property type="match status" value="1"/>
</dbReference>
<proteinExistence type="evidence at protein level"/>
<feature type="initiator methionine" description="Removed" evidence="3">
    <location>
        <position position="1"/>
    </location>
</feature>
<feature type="chain" id="PRO_0000071904" description="Histone H2B">
    <location>
        <begin position="2"/>
        <end position="121"/>
    </location>
</feature>
<feature type="region of interest" description="Disordered" evidence="2">
    <location>
        <begin position="1"/>
        <end position="27"/>
    </location>
</feature>
<feature type="modified residue" description="N,N,N-trimethylalanine" evidence="4">
    <location>
        <position position="2"/>
    </location>
</feature>
<feature type="modified residue" description="N6-acetyllysine" evidence="3 4">
    <location>
        <position position="5"/>
    </location>
</feature>
<feature type="modified residue" description="N6-acetyllysine" evidence="1">
    <location>
        <position position="41"/>
    </location>
</feature>
<feature type="cross-link" description="Glycyl lysine isopeptide (Lys-Gly) (interchain with G-Cter in ubiquitin)" evidence="1">
    <location>
        <position position="115"/>
    </location>
</feature>
<keyword id="KW-0007">Acetylation</keyword>
<keyword id="KW-0158">Chromosome</keyword>
<keyword id="KW-0903">Direct protein sequencing</keyword>
<keyword id="KW-0238">DNA-binding</keyword>
<keyword id="KW-1017">Isopeptide bond</keyword>
<keyword id="KW-0488">Methylation</keyword>
<keyword id="KW-0544">Nucleosome core</keyword>
<keyword id="KW-0539">Nucleus</keyword>
<keyword id="KW-0832">Ubl conjugation</keyword>
<evidence type="ECO:0000250" key="1"/>
<evidence type="ECO:0000256" key="2">
    <source>
        <dbReference type="SAM" id="MobiDB-lite"/>
    </source>
</evidence>
<evidence type="ECO:0000269" key="3">
    <source>
    </source>
</evidence>
<evidence type="ECO:0000269" key="4">
    <source>
    </source>
</evidence>
<evidence type="ECO:0000305" key="5"/>
<organism>
    <name type="scientific">Tetrahymena pyriformis</name>
    <dbReference type="NCBI Taxonomy" id="5908"/>
    <lineage>
        <taxon>Eukaryota</taxon>
        <taxon>Sar</taxon>
        <taxon>Alveolata</taxon>
        <taxon>Ciliophora</taxon>
        <taxon>Intramacronucleata</taxon>
        <taxon>Oligohymenophorea</taxon>
        <taxon>Hymenostomatida</taxon>
        <taxon>Tetrahymenina</taxon>
        <taxon>Tetrahymenidae</taxon>
        <taxon>Tetrahymena</taxon>
    </lineage>
</organism>
<reference key="1">
    <citation type="journal article" date="1982" name="J. Biochem.">
        <title>Tetrahymena histone H2B. Complete amino acid sequence.</title>
        <authorList>
            <person name="Nomoto M."/>
            <person name="Hayashi H."/>
            <person name="Iwai K."/>
        </authorList>
    </citation>
    <scope>PROTEIN SEQUENCE OF 2-121</scope>
    <scope>ACETYLATION AT LYS-5</scope>
</reference>
<reference key="2">
    <citation type="journal article" date="1982" name="J. Biochem.">
        <title>N-trimethylalanine, a novel blocked N-terminal residue of Tetrahymena histone H2B.</title>
        <authorList>
            <person name="Nomoto M."/>
            <person name="Kyogoku Y."/>
            <person name="Iwai K."/>
        </authorList>
    </citation>
    <scope>METHYLATION AT ALA-2</scope>
    <scope>ACETYLATION AT LYS-5</scope>
</reference>
<accession>Q7M400</accession>
<protein>
    <recommendedName>
        <fullName>Histone H2B</fullName>
    </recommendedName>
</protein>
<comment type="function">
    <text>Core component of nucleosome. Nucleosomes wrap and compact DNA into chromatin, limiting DNA accessibility to the cellular machineries which require DNA as a template. Histones thereby play a central role in transcription regulation, DNA repair, DNA replication and chromosomal stability. DNA accessibility is regulated via a complex set of post-translational modifications of histones, also called histone code, and nucleosome remodeling.</text>
</comment>
<comment type="subunit">
    <text>The nucleosome is a histone octamer containing two molecules each of H2A, H2B, H3 and H4 assembled in one H3-H4 heterotetramer and two H2A-H2B heterodimers. The octamer wraps approximately 147 bp of DNA.</text>
</comment>
<comment type="subcellular location">
    <subcellularLocation>
        <location>Nucleus</location>
    </subcellularLocation>
    <subcellularLocation>
        <location>Chromosome</location>
    </subcellularLocation>
</comment>
<comment type="PTM">
    <text evidence="1">Monoubiquitination of Lys-115 gives a specific tag for epigenetic transcriptional activation and is also prerequisite for histone H3 'Lys-4' and 'Lys-79' methylation.</text>
</comment>
<comment type="PTM">
    <text evidence="1">Acetylation occurs almost exclusively in the MAC.</text>
</comment>
<comment type="similarity">
    <text evidence="5">Belongs to the histone H2B family.</text>
</comment>